<name>LIPA_HERAR</name>
<accession>A4G9C6</accession>
<dbReference type="EC" id="2.8.1.8" evidence="1"/>
<dbReference type="EMBL" id="CU207211">
    <property type="protein sequence ID" value="CAL63113.1"/>
    <property type="molecule type" value="Genomic_DNA"/>
</dbReference>
<dbReference type="SMR" id="A4G9C6"/>
<dbReference type="STRING" id="204773.HEAR3003"/>
<dbReference type="KEGG" id="har:HEAR3003"/>
<dbReference type="eggNOG" id="COG0320">
    <property type="taxonomic scope" value="Bacteria"/>
</dbReference>
<dbReference type="HOGENOM" id="CLU_033144_2_1_4"/>
<dbReference type="OrthoDB" id="9787898at2"/>
<dbReference type="UniPathway" id="UPA00538">
    <property type="reaction ID" value="UER00593"/>
</dbReference>
<dbReference type="Proteomes" id="UP000006697">
    <property type="component" value="Chromosome"/>
</dbReference>
<dbReference type="GO" id="GO:0005737">
    <property type="term" value="C:cytoplasm"/>
    <property type="evidence" value="ECO:0007669"/>
    <property type="project" value="UniProtKB-SubCell"/>
</dbReference>
<dbReference type="GO" id="GO:0051539">
    <property type="term" value="F:4 iron, 4 sulfur cluster binding"/>
    <property type="evidence" value="ECO:0007669"/>
    <property type="project" value="UniProtKB-UniRule"/>
</dbReference>
<dbReference type="GO" id="GO:0016992">
    <property type="term" value="F:lipoate synthase activity"/>
    <property type="evidence" value="ECO:0007669"/>
    <property type="project" value="UniProtKB-UniRule"/>
</dbReference>
<dbReference type="GO" id="GO:0046872">
    <property type="term" value="F:metal ion binding"/>
    <property type="evidence" value="ECO:0007669"/>
    <property type="project" value="UniProtKB-KW"/>
</dbReference>
<dbReference type="CDD" id="cd01335">
    <property type="entry name" value="Radical_SAM"/>
    <property type="match status" value="1"/>
</dbReference>
<dbReference type="FunFam" id="3.20.20.70:FF:000040">
    <property type="entry name" value="Lipoyl synthase"/>
    <property type="match status" value="1"/>
</dbReference>
<dbReference type="Gene3D" id="3.20.20.70">
    <property type="entry name" value="Aldolase class I"/>
    <property type="match status" value="1"/>
</dbReference>
<dbReference type="HAMAP" id="MF_00206">
    <property type="entry name" value="Lipoyl_synth"/>
    <property type="match status" value="1"/>
</dbReference>
<dbReference type="InterPro" id="IPR013785">
    <property type="entry name" value="Aldolase_TIM"/>
</dbReference>
<dbReference type="InterPro" id="IPR006638">
    <property type="entry name" value="Elp3/MiaA/NifB-like_rSAM"/>
</dbReference>
<dbReference type="InterPro" id="IPR003698">
    <property type="entry name" value="Lipoyl_synth"/>
</dbReference>
<dbReference type="InterPro" id="IPR007197">
    <property type="entry name" value="rSAM"/>
</dbReference>
<dbReference type="NCBIfam" id="TIGR00510">
    <property type="entry name" value="lipA"/>
    <property type="match status" value="1"/>
</dbReference>
<dbReference type="NCBIfam" id="NF004019">
    <property type="entry name" value="PRK05481.1"/>
    <property type="match status" value="1"/>
</dbReference>
<dbReference type="NCBIfam" id="NF009544">
    <property type="entry name" value="PRK12928.1"/>
    <property type="match status" value="1"/>
</dbReference>
<dbReference type="PANTHER" id="PTHR10949">
    <property type="entry name" value="LIPOYL SYNTHASE"/>
    <property type="match status" value="1"/>
</dbReference>
<dbReference type="PANTHER" id="PTHR10949:SF0">
    <property type="entry name" value="LIPOYL SYNTHASE, MITOCHONDRIAL"/>
    <property type="match status" value="1"/>
</dbReference>
<dbReference type="Pfam" id="PF04055">
    <property type="entry name" value="Radical_SAM"/>
    <property type="match status" value="1"/>
</dbReference>
<dbReference type="PIRSF" id="PIRSF005963">
    <property type="entry name" value="Lipoyl_synth"/>
    <property type="match status" value="1"/>
</dbReference>
<dbReference type="SFLD" id="SFLDF00271">
    <property type="entry name" value="lipoyl_synthase"/>
    <property type="match status" value="1"/>
</dbReference>
<dbReference type="SFLD" id="SFLDS00029">
    <property type="entry name" value="Radical_SAM"/>
    <property type="match status" value="1"/>
</dbReference>
<dbReference type="SMART" id="SM00729">
    <property type="entry name" value="Elp3"/>
    <property type="match status" value="1"/>
</dbReference>
<dbReference type="SUPFAM" id="SSF102114">
    <property type="entry name" value="Radical SAM enzymes"/>
    <property type="match status" value="1"/>
</dbReference>
<dbReference type="PROSITE" id="PS51918">
    <property type="entry name" value="RADICAL_SAM"/>
    <property type="match status" value="1"/>
</dbReference>
<organism>
    <name type="scientific">Herminiimonas arsenicoxydans</name>
    <dbReference type="NCBI Taxonomy" id="204773"/>
    <lineage>
        <taxon>Bacteria</taxon>
        <taxon>Pseudomonadati</taxon>
        <taxon>Pseudomonadota</taxon>
        <taxon>Betaproteobacteria</taxon>
        <taxon>Burkholderiales</taxon>
        <taxon>Oxalobacteraceae</taxon>
        <taxon>Herminiimonas</taxon>
    </lineage>
</organism>
<keyword id="KW-0004">4Fe-4S</keyword>
<keyword id="KW-0963">Cytoplasm</keyword>
<keyword id="KW-0408">Iron</keyword>
<keyword id="KW-0411">Iron-sulfur</keyword>
<keyword id="KW-0479">Metal-binding</keyword>
<keyword id="KW-1185">Reference proteome</keyword>
<keyword id="KW-0949">S-adenosyl-L-methionine</keyword>
<keyword id="KW-0808">Transferase</keyword>
<comment type="function">
    <text evidence="1">Catalyzes the radical-mediated insertion of two sulfur atoms into the C-6 and C-8 positions of the octanoyl moiety bound to the lipoyl domains of lipoate-dependent enzymes, thereby converting the octanoylated domains into lipoylated derivatives.</text>
</comment>
<comment type="catalytic activity">
    <reaction evidence="1">
        <text>[[Fe-S] cluster scaffold protein carrying a second [4Fe-4S](2+) cluster] + N(6)-octanoyl-L-lysyl-[protein] + 2 oxidized [2Fe-2S]-[ferredoxin] + 2 S-adenosyl-L-methionine + 4 H(+) = [[Fe-S] cluster scaffold protein] + N(6)-[(R)-dihydrolipoyl]-L-lysyl-[protein] + 4 Fe(3+) + 2 hydrogen sulfide + 2 5'-deoxyadenosine + 2 L-methionine + 2 reduced [2Fe-2S]-[ferredoxin]</text>
        <dbReference type="Rhea" id="RHEA:16585"/>
        <dbReference type="Rhea" id="RHEA-COMP:9928"/>
        <dbReference type="Rhea" id="RHEA-COMP:10000"/>
        <dbReference type="Rhea" id="RHEA-COMP:10001"/>
        <dbReference type="Rhea" id="RHEA-COMP:10475"/>
        <dbReference type="Rhea" id="RHEA-COMP:14568"/>
        <dbReference type="Rhea" id="RHEA-COMP:14569"/>
        <dbReference type="ChEBI" id="CHEBI:15378"/>
        <dbReference type="ChEBI" id="CHEBI:17319"/>
        <dbReference type="ChEBI" id="CHEBI:29034"/>
        <dbReference type="ChEBI" id="CHEBI:29919"/>
        <dbReference type="ChEBI" id="CHEBI:33722"/>
        <dbReference type="ChEBI" id="CHEBI:33737"/>
        <dbReference type="ChEBI" id="CHEBI:33738"/>
        <dbReference type="ChEBI" id="CHEBI:57844"/>
        <dbReference type="ChEBI" id="CHEBI:59789"/>
        <dbReference type="ChEBI" id="CHEBI:78809"/>
        <dbReference type="ChEBI" id="CHEBI:83100"/>
        <dbReference type="EC" id="2.8.1.8"/>
    </reaction>
</comment>
<comment type="cofactor">
    <cofactor evidence="1">
        <name>[4Fe-4S] cluster</name>
        <dbReference type="ChEBI" id="CHEBI:49883"/>
    </cofactor>
    <text evidence="1">Binds 2 [4Fe-4S] clusters per subunit. One cluster is coordinated with 3 cysteines and an exchangeable S-adenosyl-L-methionine.</text>
</comment>
<comment type="pathway">
    <text evidence="1">Protein modification; protein lipoylation via endogenous pathway; protein N(6)-(lipoyl)lysine from octanoyl-[acyl-carrier-protein]: step 2/2.</text>
</comment>
<comment type="subcellular location">
    <subcellularLocation>
        <location evidence="1">Cytoplasm</location>
    </subcellularLocation>
</comment>
<comment type="similarity">
    <text evidence="1">Belongs to the radical SAM superfamily. Lipoyl synthase family.</text>
</comment>
<sequence length="335" mass="37333">MTIDTNPESSTPSAPAYNPSEKQKGSAKTIRIPIKVVPMERLPKPDWIRVKAGSPSTRFYEIKDILRANNLVTVCEEASCPNIGECFGKGTATFMIMGDKCTRRCPFCDVGHGRPDPLDVNEPENLAKTIAALRLNYVVITSVDRDDLRDGGAGHFAECIRRVRELSPNTRIEILVPDFRGRMDRALEILNLAPPDVMNHNLETAPRLYKEARPGSDYAYSLNLLKRFKALHPNTPTKSGIMVGLGETDEEVLQVMRDMRAHDVDMLTIGQYLMPSGDHLPVRRYVHPDTFKMYEEEAYKMGFAHAAVGAMVRSSYHADQQAHGVTAGASQLPHD</sequence>
<gene>
    <name evidence="1" type="primary">lipA</name>
    <name type="ordered locus">HEAR3003</name>
</gene>
<proteinExistence type="inferred from homology"/>
<reference key="1">
    <citation type="journal article" date="2007" name="PLoS Genet.">
        <title>A tale of two oxidation states: bacterial colonization of arsenic-rich environments.</title>
        <authorList>
            <person name="Muller D."/>
            <person name="Medigue C."/>
            <person name="Koechler S."/>
            <person name="Barbe V."/>
            <person name="Barakat M."/>
            <person name="Talla E."/>
            <person name="Bonnefoy V."/>
            <person name="Krin E."/>
            <person name="Arsene-Ploetze F."/>
            <person name="Carapito C."/>
            <person name="Chandler M."/>
            <person name="Cournoyer B."/>
            <person name="Cruveiller S."/>
            <person name="Dossat C."/>
            <person name="Duval S."/>
            <person name="Heymann M."/>
            <person name="Leize E."/>
            <person name="Lieutaud A."/>
            <person name="Lievremont D."/>
            <person name="Makita Y."/>
            <person name="Mangenot S."/>
            <person name="Nitschke W."/>
            <person name="Ortet P."/>
            <person name="Perdrial N."/>
            <person name="Schoepp B."/>
            <person name="Siguier P."/>
            <person name="Simeonova D.D."/>
            <person name="Rouy Z."/>
            <person name="Segurens B."/>
            <person name="Turlin E."/>
            <person name="Vallenet D."/>
            <person name="van Dorsselaer A."/>
            <person name="Weiss S."/>
            <person name="Weissenbach J."/>
            <person name="Lett M.-C."/>
            <person name="Danchin A."/>
            <person name="Bertin P.N."/>
        </authorList>
    </citation>
    <scope>NUCLEOTIDE SEQUENCE [LARGE SCALE GENOMIC DNA]</scope>
    <source>
        <strain>ULPAs1</strain>
    </source>
</reference>
<protein>
    <recommendedName>
        <fullName evidence="1">Lipoyl synthase</fullName>
        <ecNumber evidence="1">2.8.1.8</ecNumber>
    </recommendedName>
    <alternativeName>
        <fullName evidence="1">Lip-syn</fullName>
        <shortName evidence="1">LS</shortName>
    </alternativeName>
    <alternativeName>
        <fullName evidence="1">Lipoate synthase</fullName>
    </alternativeName>
    <alternativeName>
        <fullName evidence="1">Lipoic acid synthase</fullName>
    </alternativeName>
    <alternativeName>
        <fullName evidence="1">Sulfur insertion protein LipA</fullName>
    </alternativeName>
</protein>
<evidence type="ECO:0000255" key="1">
    <source>
        <dbReference type="HAMAP-Rule" id="MF_00206"/>
    </source>
</evidence>
<evidence type="ECO:0000255" key="2">
    <source>
        <dbReference type="PROSITE-ProRule" id="PRU01266"/>
    </source>
</evidence>
<evidence type="ECO:0000256" key="3">
    <source>
        <dbReference type="SAM" id="MobiDB-lite"/>
    </source>
</evidence>
<feature type="chain" id="PRO_0000325264" description="Lipoyl synthase">
    <location>
        <begin position="1"/>
        <end position="335"/>
    </location>
</feature>
<feature type="domain" description="Radical SAM core" evidence="2">
    <location>
        <begin position="86"/>
        <end position="304"/>
    </location>
</feature>
<feature type="region of interest" description="Disordered" evidence="3">
    <location>
        <begin position="1"/>
        <end position="29"/>
    </location>
</feature>
<feature type="compositionally biased region" description="Polar residues" evidence="3">
    <location>
        <begin position="1"/>
        <end position="13"/>
    </location>
</feature>
<feature type="binding site" evidence="1">
    <location>
        <position position="75"/>
    </location>
    <ligand>
        <name>[4Fe-4S] cluster</name>
        <dbReference type="ChEBI" id="CHEBI:49883"/>
        <label>1</label>
    </ligand>
</feature>
<feature type="binding site" evidence="1">
    <location>
        <position position="80"/>
    </location>
    <ligand>
        <name>[4Fe-4S] cluster</name>
        <dbReference type="ChEBI" id="CHEBI:49883"/>
        <label>1</label>
    </ligand>
</feature>
<feature type="binding site" evidence="1">
    <location>
        <position position="86"/>
    </location>
    <ligand>
        <name>[4Fe-4S] cluster</name>
        <dbReference type="ChEBI" id="CHEBI:49883"/>
        <label>1</label>
    </ligand>
</feature>
<feature type="binding site" evidence="1">
    <location>
        <position position="101"/>
    </location>
    <ligand>
        <name>[4Fe-4S] cluster</name>
        <dbReference type="ChEBI" id="CHEBI:49883"/>
        <label>2</label>
        <note>4Fe-4S-S-AdoMet</note>
    </ligand>
</feature>
<feature type="binding site" evidence="1">
    <location>
        <position position="105"/>
    </location>
    <ligand>
        <name>[4Fe-4S] cluster</name>
        <dbReference type="ChEBI" id="CHEBI:49883"/>
        <label>2</label>
        <note>4Fe-4S-S-AdoMet</note>
    </ligand>
</feature>
<feature type="binding site" evidence="1">
    <location>
        <position position="108"/>
    </location>
    <ligand>
        <name>[4Fe-4S] cluster</name>
        <dbReference type="ChEBI" id="CHEBI:49883"/>
        <label>2</label>
        <note>4Fe-4S-S-AdoMet</note>
    </ligand>
</feature>
<feature type="binding site" evidence="1">
    <location>
        <position position="315"/>
    </location>
    <ligand>
        <name>[4Fe-4S] cluster</name>
        <dbReference type="ChEBI" id="CHEBI:49883"/>
        <label>1</label>
    </ligand>
</feature>